<accession>A3NXT4</accession>
<protein>
    <recommendedName>
        <fullName evidence="1">Small ribosomal subunit biogenesis GTPase RsgA</fullName>
        <ecNumber evidence="1">3.6.1.-</ecNumber>
    </recommendedName>
</protein>
<comment type="function">
    <text evidence="1">One of several proteins that assist in the late maturation steps of the functional core of the 30S ribosomal subunit. Helps release RbfA from mature subunits. May play a role in the assembly of ribosomal proteins into the subunit. Circularly permuted GTPase that catalyzes slow GTP hydrolysis, GTPase activity is stimulated by the 30S ribosomal subunit.</text>
</comment>
<comment type="cofactor">
    <cofactor evidence="1">
        <name>Zn(2+)</name>
        <dbReference type="ChEBI" id="CHEBI:29105"/>
    </cofactor>
    <text evidence="1">Binds 1 zinc ion per subunit.</text>
</comment>
<comment type="subunit">
    <text evidence="1">Monomer. Associates with 30S ribosomal subunit, binds 16S rRNA.</text>
</comment>
<comment type="subcellular location">
    <subcellularLocation>
        <location evidence="1">Cytoplasm</location>
    </subcellularLocation>
</comment>
<comment type="similarity">
    <text evidence="1">Belongs to the TRAFAC class YlqF/YawG GTPase family. RsgA subfamily.</text>
</comment>
<evidence type="ECO:0000255" key="1">
    <source>
        <dbReference type="HAMAP-Rule" id="MF_01820"/>
    </source>
</evidence>
<evidence type="ECO:0000255" key="2">
    <source>
        <dbReference type="PROSITE-ProRule" id="PRU01058"/>
    </source>
</evidence>
<evidence type="ECO:0000256" key="3">
    <source>
        <dbReference type="SAM" id="MobiDB-lite"/>
    </source>
</evidence>
<name>RSGA_BURP0</name>
<organism>
    <name type="scientific">Burkholderia pseudomallei (strain 1106a)</name>
    <dbReference type="NCBI Taxonomy" id="357348"/>
    <lineage>
        <taxon>Bacteria</taxon>
        <taxon>Pseudomonadati</taxon>
        <taxon>Pseudomonadota</taxon>
        <taxon>Betaproteobacteria</taxon>
        <taxon>Burkholderiales</taxon>
        <taxon>Burkholderiaceae</taxon>
        <taxon>Burkholderia</taxon>
        <taxon>pseudomallei group</taxon>
    </lineage>
</organism>
<keyword id="KW-0963">Cytoplasm</keyword>
<keyword id="KW-0342">GTP-binding</keyword>
<keyword id="KW-0378">Hydrolase</keyword>
<keyword id="KW-0479">Metal-binding</keyword>
<keyword id="KW-0547">Nucleotide-binding</keyword>
<keyword id="KW-0690">Ribosome biogenesis</keyword>
<keyword id="KW-0694">RNA-binding</keyword>
<keyword id="KW-0699">rRNA-binding</keyword>
<keyword id="KW-0862">Zinc</keyword>
<gene>
    <name evidence="1" type="primary">rsgA</name>
    <name type="ordered locus">BURPS1106A_2910</name>
</gene>
<feature type="chain" id="PRO_1000216031" description="Small ribosomal subunit biogenesis GTPase RsgA">
    <location>
        <begin position="1"/>
        <end position="314"/>
    </location>
</feature>
<feature type="domain" description="CP-type G" evidence="2">
    <location>
        <begin position="85"/>
        <end position="246"/>
    </location>
</feature>
<feature type="region of interest" description="Disordered" evidence="3">
    <location>
        <begin position="1"/>
        <end position="21"/>
    </location>
</feature>
<feature type="binding site" evidence="1">
    <location>
        <begin position="134"/>
        <end position="137"/>
    </location>
    <ligand>
        <name>GTP</name>
        <dbReference type="ChEBI" id="CHEBI:37565"/>
    </ligand>
</feature>
<feature type="binding site" evidence="1">
    <location>
        <begin position="188"/>
        <end position="196"/>
    </location>
    <ligand>
        <name>GTP</name>
        <dbReference type="ChEBI" id="CHEBI:37565"/>
    </ligand>
</feature>
<feature type="binding site" evidence="1">
    <location>
        <position position="270"/>
    </location>
    <ligand>
        <name>Zn(2+)</name>
        <dbReference type="ChEBI" id="CHEBI:29105"/>
    </ligand>
</feature>
<feature type="binding site" evidence="1">
    <location>
        <position position="275"/>
    </location>
    <ligand>
        <name>Zn(2+)</name>
        <dbReference type="ChEBI" id="CHEBI:29105"/>
    </ligand>
</feature>
<feature type="binding site" evidence="1">
    <location>
        <position position="277"/>
    </location>
    <ligand>
        <name>Zn(2+)</name>
        <dbReference type="ChEBI" id="CHEBI:29105"/>
    </ligand>
</feature>
<feature type="binding site" evidence="1">
    <location>
        <position position="283"/>
    </location>
    <ligand>
        <name>Zn(2+)</name>
        <dbReference type="ChEBI" id="CHEBI:29105"/>
    </ligand>
</feature>
<sequence length="314" mass="34248">MKRAPTKQPAKPAARGGERAQGRVIAAHGRHYIVAPADGGPMLQCFPRGKKSEVAVGDRVAYERTSADQGVIVEIGERRNLLYRSDQFKSKLFAANLDQLLIVLATEPYFSEDLLGRALIAAEANELKPIVVLNKIDVEAALPVARERLAPYRALGYDVLELSVKGAPDDARAQLAPRLAGHSTILLGQSGMGKSTLVNLLVPDAEAATREISAALNSGRHTTTFTRLYPLQDGGALIDSPGFQEFGLYHLTEGRLERAFPEFRPLLAHCRFYNCHHLHEPGCAILEALADGRIAPTRHALYAQLVHEASQIVR</sequence>
<dbReference type="EC" id="3.6.1.-" evidence="1"/>
<dbReference type="EMBL" id="CP000572">
    <property type="protein sequence ID" value="ABN91235.1"/>
    <property type="molecule type" value="Genomic_DNA"/>
</dbReference>
<dbReference type="RefSeq" id="WP_004535470.1">
    <property type="nucleotide sequence ID" value="NC_009076.1"/>
</dbReference>
<dbReference type="SMR" id="A3NXT4"/>
<dbReference type="KEGG" id="bpl:BURPS1106A_2910"/>
<dbReference type="HOGENOM" id="CLU_033617_2_0_4"/>
<dbReference type="Proteomes" id="UP000006738">
    <property type="component" value="Chromosome I"/>
</dbReference>
<dbReference type="GO" id="GO:0005737">
    <property type="term" value="C:cytoplasm"/>
    <property type="evidence" value="ECO:0007669"/>
    <property type="project" value="UniProtKB-SubCell"/>
</dbReference>
<dbReference type="GO" id="GO:0005525">
    <property type="term" value="F:GTP binding"/>
    <property type="evidence" value="ECO:0007669"/>
    <property type="project" value="UniProtKB-UniRule"/>
</dbReference>
<dbReference type="GO" id="GO:0003924">
    <property type="term" value="F:GTPase activity"/>
    <property type="evidence" value="ECO:0007669"/>
    <property type="project" value="UniProtKB-UniRule"/>
</dbReference>
<dbReference type="GO" id="GO:0046872">
    <property type="term" value="F:metal ion binding"/>
    <property type="evidence" value="ECO:0007669"/>
    <property type="project" value="UniProtKB-KW"/>
</dbReference>
<dbReference type="GO" id="GO:0019843">
    <property type="term" value="F:rRNA binding"/>
    <property type="evidence" value="ECO:0007669"/>
    <property type="project" value="UniProtKB-KW"/>
</dbReference>
<dbReference type="GO" id="GO:0042274">
    <property type="term" value="P:ribosomal small subunit biogenesis"/>
    <property type="evidence" value="ECO:0007669"/>
    <property type="project" value="UniProtKB-UniRule"/>
</dbReference>
<dbReference type="CDD" id="cd04466">
    <property type="entry name" value="S1_YloQ_GTPase"/>
    <property type="match status" value="1"/>
</dbReference>
<dbReference type="CDD" id="cd01854">
    <property type="entry name" value="YjeQ_EngC"/>
    <property type="match status" value="1"/>
</dbReference>
<dbReference type="Gene3D" id="2.40.50.140">
    <property type="entry name" value="Nucleic acid-binding proteins"/>
    <property type="match status" value="1"/>
</dbReference>
<dbReference type="Gene3D" id="3.40.50.300">
    <property type="entry name" value="P-loop containing nucleotide triphosphate hydrolases"/>
    <property type="match status" value="1"/>
</dbReference>
<dbReference type="Gene3D" id="1.10.40.50">
    <property type="entry name" value="Probable gtpase engc, domain 3"/>
    <property type="match status" value="1"/>
</dbReference>
<dbReference type="HAMAP" id="MF_01820">
    <property type="entry name" value="GTPase_RsgA"/>
    <property type="match status" value="1"/>
</dbReference>
<dbReference type="InterPro" id="IPR030378">
    <property type="entry name" value="G_CP_dom"/>
</dbReference>
<dbReference type="InterPro" id="IPR012340">
    <property type="entry name" value="NA-bd_OB-fold"/>
</dbReference>
<dbReference type="InterPro" id="IPR027417">
    <property type="entry name" value="P-loop_NTPase"/>
</dbReference>
<dbReference type="InterPro" id="IPR004881">
    <property type="entry name" value="Ribosome_biogen_GTPase_RsgA"/>
</dbReference>
<dbReference type="InterPro" id="IPR010914">
    <property type="entry name" value="RsgA_GTPase_dom"/>
</dbReference>
<dbReference type="InterPro" id="IPR031944">
    <property type="entry name" value="RsgA_N"/>
</dbReference>
<dbReference type="NCBIfam" id="TIGR00157">
    <property type="entry name" value="ribosome small subunit-dependent GTPase A"/>
    <property type="match status" value="1"/>
</dbReference>
<dbReference type="PANTHER" id="PTHR32120">
    <property type="entry name" value="SMALL RIBOSOMAL SUBUNIT BIOGENESIS GTPASE RSGA"/>
    <property type="match status" value="1"/>
</dbReference>
<dbReference type="PANTHER" id="PTHR32120:SF11">
    <property type="entry name" value="SMALL RIBOSOMAL SUBUNIT BIOGENESIS GTPASE RSGA 1, MITOCHONDRIAL-RELATED"/>
    <property type="match status" value="1"/>
</dbReference>
<dbReference type="Pfam" id="PF03193">
    <property type="entry name" value="RsgA_GTPase"/>
    <property type="match status" value="1"/>
</dbReference>
<dbReference type="SUPFAM" id="SSF50249">
    <property type="entry name" value="Nucleic acid-binding proteins"/>
    <property type="match status" value="1"/>
</dbReference>
<dbReference type="SUPFAM" id="SSF52540">
    <property type="entry name" value="P-loop containing nucleoside triphosphate hydrolases"/>
    <property type="match status" value="1"/>
</dbReference>
<dbReference type="PROSITE" id="PS50936">
    <property type="entry name" value="ENGC_GTPASE"/>
    <property type="match status" value="1"/>
</dbReference>
<dbReference type="PROSITE" id="PS51721">
    <property type="entry name" value="G_CP"/>
    <property type="match status" value="1"/>
</dbReference>
<reference key="1">
    <citation type="journal article" date="2010" name="Genome Biol. Evol.">
        <title>Continuing evolution of Burkholderia mallei through genome reduction and large-scale rearrangements.</title>
        <authorList>
            <person name="Losada L."/>
            <person name="Ronning C.M."/>
            <person name="DeShazer D."/>
            <person name="Woods D."/>
            <person name="Fedorova N."/>
            <person name="Kim H.S."/>
            <person name="Shabalina S.A."/>
            <person name="Pearson T.R."/>
            <person name="Brinkac L."/>
            <person name="Tan P."/>
            <person name="Nandi T."/>
            <person name="Crabtree J."/>
            <person name="Badger J."/>
            <person name="Beckstrom-Sternberg S."/>
            <person name="Saqib M."/>
            <person name="Schutzer S.E."/>
            <person name="Keim P."/>
            <person name="Nierman W.C."/>
        </authorList>
    </citation>
    <scope>NUCLEOTIDE SEQUENCE [LARGE SCALE GENOMIC DNA]</scope>
    <source>
        <strain>1106a</strain>
    </source>
</reference>
<proteinExistence type="inferred from homology"/>